<organism>
    <name type="scientific">Salmonella paratyphi A (strain ATCC 9150 / SARB42)</name>
    <dbReference type="NCBI Taxonomy" id="295319"/>
    <lineage>
        <taxon>Bacteria</taxon>
        <taxon>Pseudomonadati</taxon>
        <taxon>Pseudomonadota</taxon>
        <taxon>Gammaproteobacteria</taxon>
        <taxon>Enterobacterales</taxon>
        <taxon>Enterobacteriaceae</taxon>
        <taxon>Salmonella</taxon>
    </lineage>
</organism>
<accession>Q5PDE5</accession>
<protein>
    <recommendedName>
        <fullName evidence="1">LPS-assembly protein LptD</fullName>
    </recommendedName>
</protein>
<evidence type="ECO:0000255" key="1">
    <source>
        <dbReference type="HAMAP-Rule" id="MF_01411"/>
    </source>
</evidence>
<gene>
    <name evidence="1" type="primary">lptD</name>
    <name type="synonym">imp</name>
    <name type="synonym">ostA</name>
    <name type="ordered locus">SPA0094</name>
</gene>
<sequence length="784" mass="89689">MKKRIPTLLATMIASALYSHQGLAADLASQCMLGVPSYDRPLVKGDTNDLPVTINADNAKGNYPDDAVFTGNVDIMQGNSRLQADEVQLHQKQAEGQPEPVRTVDALGNVHYDDNQVILKGPKGWANLNTKDTNVWEGDYQMVGRQGRGKADLMKQRGENRYTILENGSFTSCLPGSDTWSVVGSEVIHDREEQVAEIWNARFKVGPVPIFYSPYLQLPVGDKRRSGFLIPNAKYTTKNYFEFYLPYYWNIAPNMDATITPHYMHRRGNIMWENEFRYLMQAGAGLMELDYLPSDKVYEDEHPKEGDKHRWLFYWQHSGVMDQVWRFNVDYTKVSDSSYFNDFDSKYGSSTDGYATQKFSVGYAVQNFDATVSTKQFQVFNDQNTSSYSAEPQLDVNYYHNDLGPFDTRIYGQAVHFVNTKDNMPEATRVHLEPTISLPLSNRWGSLNTEAKLMATHYQQTNLDWYNANNSKKLEDSVNRVMPQFKVDGKLIFERDMAMLAPGYTQTLEPRVQYLYVPYRDQSGIYNYDSSLLQSDYNGLFRDRTYGGLDRIASANQVTTGVTTRIYDDAAVERFNVSVGQIYYFTESRTGDDNIKWENDDKTGSLVWAGDTYWRISERWGLRSGVQYDTRLDSVATSSSSLEYRRDQDRLVQLNYRYASPEYIQATLPSYYSTAEQYKNGINQVGAVASWPIADRWSIVGAYYFDTNSSKPADQMLGLQYNSCCYAIRVGYERKLNGWDNDKQHAIYDNAIGFNIELRGLSSNYGLGTQEMLRSNILPYQSSM</sequence>
<comment type="function">
    <text evidence="1">Together with LptE, is involved in the assembly of lipopolysaccharide (LPS) at the surface of the outer membrane.</text>
</comment>
<comment type="subunit">
    <text evidence="1">Component of the lipopolysaccharide transport and assembly complex. Interacts with LptE and LptA.</text>
</comment>
<comment type="subcellular location">
    <subcellularLocation>
        <location evidence="1">Cell outer membrane</location>
    </subcellularLocation>
</comment>
<comment type="PTM">
    <text evidence="1">Contains two intramolecular disulfide bonds.</text>
</comment>
<comment type="similarity">
    <text evidence="1">Belongs to the LptD family.</text>
</comment>
<dbReference type="EMBL" id="CP000026">
    <property type="protein sequence ID" value="AAV76127.1"/>
    <property type="molecule type" value="Genomic_DNA"/>
</dbReference>
<dbReference type="RefSeq" id="WP_000746111.1">
    <property type="nucleotide sequence ID" value="NC_006511.1"/>
</dbReference>
<dbReference type="SMR" id="Q5PDE5"/>
<dbReference type="KEGG" id="spt:SPA0094"/>
<dbReference type="HOGENOM" id="CLU_009039_2_0_6"/>
<dbReference type="Proteomes" id="UP000008185">
    <property type="component" value="Chromosome"/>
</dbReference>
<dbReference type="GO" id="GO:0009279">
    <property type="term" value="C:cell outer membrane"/>
    <property type="evidence" value="ECO:0007669"/>
    <property type="project" value="UniProtKB-SubCell"/>
</dbReference>
<dbReference type="GO" id="GO:1990351">
    <property type="term" value="C:transporter complex"/>
    <property type="evidence" value="ECO:0007669"/>
    <property type="project" value="TreeGrafter"/>
</dbReference>
<dbReference type="GO" id="GO:0043165">
    <property type="term" value="P:Gram-negative-bacterium-type cell outer membrane assembly"/>
    <property type="evidence" value="ECO:0007669"/>
    <property type="project" value="UniProtKB-UniRule"/>
</dbReference>
<dbReference type="GO" id="GO:0015920">
    <property type="term" value="P:lipopolysaccharide transport"/>
    <property type="evidence" value="ECO:0007669"/>
    <property type="project" value="InterPro"/>
</dbReference>
<dbReference type="FunFam" id="2.60.450.10:FF:000003">
    <property type="entry name" value="LPS-assembly protein LptD"/>
    <property type="match status" value="1"/>
</dbReference>
<dbReference type="Gene3D" id="2.60.450.10">
    <property type="entry name" value="Lipopolysaccharide (LPS) transport protein A like domain"/>
    <property type="match status" value="1"/>
</dbReference>
<dbReference type="HAMAP" id="MF_01411">
    <property type="entry name" value="LPS_assembly_LptD"/>
    <property type="match status" value="1"/>
</dbReference>
<dbReference type="InterPro" id="IPR020889">
    <property type="entry name" value="LipoPS_assembly_LptD"/>
</dbReference>
<dbReference type="InterPro" id="IPR050218">
    <property type="entry name" value="LptD"/>
</dbReference>
<dbReference type="InterPro" id="IPR007543">
    <property type="entry name" value="LptD_C"/>
</dbReference>
<dbReference type="InterPro" id="IPR005653">
    <property type="entry name" value="OstA-like_N"/>
</dbReference>
<dbReference type="NCBIfam" id="NF002997">
    <property type="entry name" value="PRK03761.1"/>
    <property type="match status" value="1"/>
</dbReference>
<dbReference type="PANTHER" id="PTHR30189">
    <property type="entry name" value="LPS-ASSEMBLY PROTEIN"/>
    <property type="match status" value="1"/>
</dbReference>
<dbReference type="PANTHER" id="PTHR30189:SF1">
    <property type="entry name" value="LPS-ASSEMBLY PROTEIN LPTD"/>
    <property type="match status" value="1"/>
</dbReference>
<dbReference type="Pfam" id="PF04453">
    <property type="entry name" value="LptD"/>
    <property type="match status" value="1"/>
</dbReference>
<dbReference type="Pfam" id="PF03968">
    <property type="entry name" value="LptD_N"/>
    <property type="match status" value="1"/>
</dbReference>
<feature type="signal peptide" evidence="1">
    <location>
        <begin position="1"/>
        <end position="24"/>
    </location>
</feature>
<feature type="chain" id="PRO_0000020287" description="LPS-assembly protein LptD">
    <location>
        <begin position="25"/>
        <end position="784"/>
    </location>
</feature>
<feature type="disulfide bond" evidence="1">
    <location>
        <begin position="31"/>
        <end position="724"/>
    </location>
</feature>
<feature type="disulfide bond" evidence="1">
    <location>
        <begin position="173"/>
        <end position="725"/>
    </location>
</feature>
<reference key="1">
    <citation type="journal article" date="2004" name="Nat. Genet.">
        <title>Comparison of genome degradation in Paratyphi A and Typhi, human-restricted serovars of Salmonella enterica that cause typhoid.</title>
        <authorList>
            <person name="McClelland M."/>
            <person name="Sanderson K.E."/>
            <person name="Clifton S.W."/>
            <person name="Latreille P."/>
            <person name="Porwollik S."/>
            <person name="Sabo A."/>
            <person name="Meyer R."/>
            <person name="Bieri T."/>
            <person name="Ozersky P."/>
            <person name="McLellan M."/>
            <person name="Harkins C.R."/>
            <person name="Wang C."/>
            <person name="Nguyen C."/>
            <person name="Berghoff A."/>
            <person name="Elliott G."/>
            <person name="Kohlberg S."/>
            <person name="Strong C."/>
            <person name="Du F."/>
            <person name="Carter J."/>
            <person name="Kremizki C."/>
            <person name="Layman D."/>
            <person name="Leonard S."/>
            <person name="Sun H."/>
            <person name="Fulton L."/>
            <person name="Nash W."/>
            <person name="Miner T."/>
            <person name="Minx P."/>
            <person name="Delehaunty K."/>
            <person name="Fronick C."/>
            <person name="Magrini V."/>
            <person name="Nhan M."/>
            <person name="Warren W."/>
            <person name="Florea L."/>
            <person name="Spieth J."/>
            <person name="Wilson R.K."/>
        </authorList>
    </citation>
    <scope>NUCLEOTIDE SEQUENCE [LARGE SCALE GENOMIC DNA]</scope>
    <source>
        <strain>ATCC 9150 / SARB42</strain>
    </source>
</reference>
<proteinExistence type="inferred from homology"/>
<keyword id="KW-0998">Cell outer membrane</keyword>
<keyword id="KW-1015">Disulfide bond</keyword>
<keyword id="KW-0472">Membrane</keyword>
<keyword id="KW-0732">Signal</keyword>
<name>LPTD_SALPA</name>